<gene>
    <name evidence="11" type="primary">AGD5</name>
    <name evidence="13" type="synonym">MTV4</name>
    <name evidence="12" type="synonym">NEV</name>
    <name evidence="10" type="synonym">ZIG3</name>
    <name evidence="10" type="synonym">ZIGA3</name>
    <name evidence="15" type="ordered locus">At5g54310</name>
    <name evidence="16" type="ORF">MDK4.13</name>
</gene>
<evidence type="ECO:0000255" key="1">
    <source>
        <dbReference type="PROSITE-ProRule" id="PRU00288"/>
    </source>
</evidence>
<evidence type="ECO:0000256" key="2">
    <source>
        <dbReference type="SAM" id="MobiDB-lite"/>
    </source>
</evidence>
<evidence type="ECO:0000269" key="3">
    <source>
    </source>
</evidence>
<evidence type="ECO:0000269" key="4">
    <source>
    </source>
</evidence>
<evidence type="ECO:0000269" key="5">
    <source>
    </source>
</evidence>
<evidence type="ECO:0000269" key="6">
    <source>
    </source>
</evidence>
<evidence type="ECO:0000269" key="7">
    <source>
    </source>
</evidence>
<evidence type="ECO:0000269" key="8">
    <source>
    </source>
</evidence>
<evidence type="ECO:0000269" key="9">
    <source>
    </source>
</evidence>
<evidence type="ECO:0000303" key="10">
    <source>
    </source>
</evidence>
<evidence type="ECO:0000303" key="11">
    <source>
    </source>
</evidence>
<evidence type="ECO:0000303" key="12">
    <source>
    </source>
</evidence>
<evidence type="ECO:0000303" key="13">
    <source>
    </source>
</evidence>
<evidence type="ECO:0000305" key="14"/>
<evidence type="ECO:0000312" key="15">
    <source>
        <dbReference type="Araport" id="AT5G54310"/>
    </source>
</evidence>
<evidence type="ECO:0000312" key="16">
    <source>
        <dbReference type="EMBL" id="BAB10754.1"/>
    </source>
</evidence>
<comment type="function">
    <text evidence="3 4 5 6 7 8 9">GTPase-activating protein (GAP) for ADP ribosylation factor (ARF) (PubMed:19429787). Mediates clathrin-dependent trafficking of vacuolar cargo from the trans-Golgi network (TGN) (PubMed:23771894). Promotes plant growth (PubMed:23771894, PubMed:25763490). Involved in the regulation of membrane trafficking and cell separation during floral organ shedding and abscission (PubMed:19429787, PubMed:20081191, PubMed:20230490, PubMed:23963677). Prevents abscission zone (AZ) cells enlargement (PubMed:23963677, PubMed:25763490). Exhibits ARF-GTPase activity toward ARF1 at TGN (PubMed:21105926).</text>
</comment>
<comment type="subunit">
    <text evidence="6 7">Interacts with ARF1 at trans-Golgi network (TGN) (PubMed:21105926). Binds to clathrin heavy chain (PubMed:23771894).</text>
</comment>
<comment type="subcellular location">
    <subcellularLocation>
        <location evidence="3 6 7">Golgi apparatus</location>
        <location evidence="3 6 7">trans-Golgi network</location>
    </subcellularLocation>
    <subcellularLocation>
        <location evidence="3">Endosome</location>
    </subcellularLocation>
    <subcellularLocation>
        <location evidence="7">Cytoplasmic vesicle</location>
        <location evidence="7">Clathrin-coated vesicle</location>
    </subcellularLocation>
    <text evidence="6 7">Colocalizes with AGD5 at the trans-Golgi network (TGN) (PubMed:21105926). Colocalizes with clathrin at the TGN (PubMed:23771894).</text>
</comment>
<comment type="tissue specificity">
    <text evidence="3 7">Expressed in inflorescence stems, abscission zones, stigmas, roots, roots meristems, embryos, and floral and leaf vasculatures.</text>
</comment>
<comment type="developmental stage">
    <text evidence="7">Strongly expressed in developing and mature embryos.</text>
</comment>
<comment type="disruption phenotype">
    <text evidence="3 4 5 7 8 9">Abnormal vacuolar trafficking of soluble cargo proteins, and premature termination of the shoot apical meristem and of floral meristems leading to short siliques and abscission defect (PubMed:23771894, PubMed:25763490). Plant missing both AGD5 and MTV1 are severely dwarfed and have altered subcellular distribution of clathrin-coated vesicle (CCV) cargo exported from the trans-Golgi network (TGN) (PubMed:23771894). Floral organs remain attached to the plant body after the shedding of mature seeds, including abnormal petal breakstrength (pBS) (PubMed:19429787, PubMed:20081191, PubMed:20230490, PubMed:23963677). Ectopic enlargement of abscission zone (AZ) cells during shedding (PubMed:23963677). Impaired floral organ shedding associated with defects in the structure of the Golgi apparatus and extensive accumulation of vesicles adjacent to the cell walls in abscission zone regions (PubMed:19429787, PubMed:20081191, PubMed:20230490). Rescued by SOBIR1/EVR disruption, leading to premature shedding of floral organs and enlarge abscission zones (PubMed:20081191). Rescued by SERK1 disruption, leading to normal Golgi apparatus and endosome, as well as correct floral organ shedding (PubMed:20230490).</text>
</comment>
<feature type="chain" id="PRO_0000352497" description="ADP-ribosylation factor GTPase-activating protein AGD5">
    <location>
        <begin position="1"/>
        <end position="483"/>
    </location>
</feature>
<feature type="domain" description="Arf-GAP" evidence="1">
    <location>
        <begin position="16"/>
        <end position="130"/>
    </location>
</feature>
<feature type="zinc finger region" description="C4-type" evidence="1">
    <location>
        <begin position="31"/>
        <end position="54"/>
    </location>
</feature>
<feature type="region of interest" description="Disordered" evidence="2">
    <location>
        <begin position="123"/>
        <end position="226"/>
    </location>
</feature>
<feature type="region of interest" description="Disordered" evidence="2">
    <location>
        <begin position="238"/>
        <end position="310"/>
    </location>
</feature>
<feature type="region of interest" description="Disordered" evidence="2">
    <location>
        <begin position="434"/>
        <end position="483"/>
    </location>
</feature>
<feature type="compositionally biased region" description="Basic and acidic residues" evidence="2">
    <location>
        <begin position="123"/>
        <end position="144"/>
    </location>
</feature>
<feature type="compositionally biased region" description="Polar residues" evidence="2">
    <location>
        <begin position="239"/>
        <end position="248"/>
    </location>
</feature>
<feature type="compositionally biased region" description="Polar residues" evidence="2">
    <location>
        <begin position="261"/>
        <end position="271"/>
    </location>
</feature>
<feature type="compositionally biased region" description="Low complexity" evidence="2">
    <location>
        <begin position="278"/>
        <end position="291"/>
    </location>
</feature>
<feature type="compositionally biased region" description="Polar residues" evidence="2">
    <location>
        <begin position="434"/>
        <end position="448"/>
    </location>
</feature>
<feature type="compositionally biased region" description="Low complexity" evidence="2">
    <location>
        <begin position="449"/>
        <end position="466"/>
    </location>
</feature>
<feature type="mutagenesis site" description="In nev-9; impaired floral organ shedding." evidence="3">
    <original>C</original>
    <variation>Y</variation>
    <location>
        <position position="34"/>
    </location>
</feature>
<feature type="mutagenesis site" description="In nev-1; impaired floral organ shedding." evidence="3">
    <original>C</original>
    <variation>Y</variation>
    <location>
        <position position="51"/>
    </location>
</feature>
<feature type="mutagenesis site" description="In nev-3; impaired floral organ shedding." evidence="3">
    <original>R</original>
    <variation>K</variation>
    <location>
        <position position="59"/>
    </location>
</feature>
<feature type="mutagenesis site" description="Impaired ARF-GTPase activity toward ARF1 at trans-Golgi network." evidence="6">
    <original>R</original>
    <variation>Q</variation>
    <location>
        <position position="59"/>
    </location>
</feature>
<feature type="sequence conflict" description="In Ref. 5; AAM67219." evidence="14" ref="5">
    <original>R</original>
    <variation>T</variation>
    <location>
        <position position="145"/>
    </location>
</feature>
<reference key="1">
    <citation type="journal article" date="2009" name="Development">
        <title>Regulation of membrane trafficking and organ separation by the NEVERSHED ARF-GAP protein.</title>
        <authorList>
            <person name="Liljegren S.J."/>
            <person name="Leslie M.E."/>
            <person name="Darnielle L."/>
            <person name="Lewis M.W."/>
            <person name="Taylor S.M."/>
            <person name="Luo R."/>
            <person name="Geldner N."/>
            <person name="Chory J."/>
            <person name="Randazzo P.A."/>
            <person name="Yanofsky M.F."/>
            <person name="Ecker J.R."/>
        </authorList>
    </citation>
    <scope>NUCLEOTIDE SEQUENCE [MRNA]</scope>
    <scope>FUNCTION</scope>
    <scope>DISRUPTION PHENOTYPE</scope>
    <scope>MUTAGENESIS OF CYS-34; CYS-51 AND ARG-59</scope>
    <scope>SUBCELLULAR LOCATION</scope>
    <scope>TISSUE SPECIFICITY</scope>
    <source>
        <strain>cv. Columbia</strain>
    </source>
</reference>
<reference key="2">
    <citation type="journal article" date="1998" name="DNA Res.">
        <title>Structural analysis of Arabidopsis thaliana chromosome 5. V. Sequence features of the regions of 1,381,565 bp covered by twenty one physically assigned P1 and TAC clones.</title>
        <authorList>
            <person name="Kaneko T."/>
            <person name="Kotani H."/>
            <person name="Nakamura Y."/>
            <person name="Sato S."/>
            <person name="Asamizu E."/>
            <person name="Miyajima N."/>
            <person name="Tabata S."/>
        </authorList>
    </citation>
    <scope>NUCLEOTIDE SEQUENCE [LARGE SCALE GENOMIC DNA]</scope>
    <source>
        <strain>cv. Columbia</strain>
    </source>
</reference>
<reference key="3">
    <citation type="journal article" date="2017" name="Plant J.">
        <title>Araport11: a complete reannotation of the Arabidopsis thaliana reference genome.</title>
        <authorList>
            <person name="Cheng C.Y."/>
            <person name="Krishnakumar V."/>
            <person name="Chan A.P."/>
            <person name="Thibaud-Nissen F."/>
            <person name="Schobel S."/>
            <person name="Town C.D."/>
        </authorList>
    </citation>
    <scope>GENOME REANNOTATION</scope>
    <source>
        <strain>cv. Columbia</strain>
    </source>
</reference>
<reference key="4">
    <citation type="journal article" date="2003" name="Science">
        <title>Empirical analysis of transcriptional activity in the Arabidopsis genome.</title>
        <authorList>
            <person name="Yamada K."/>
            <person name="Lim J."/>
            <person name="Dale J.M."/>
            <person name="Chen H."/>
            <person name="Shinn P."/>
            <person name="Palm C.J."/>
            <person name="Southwick A.M."/>
            <person name="Wu H.C."/>
            <person name="Kim C.J."/>
            <person name="Nguyen M."/>
            <person name="Pham P.K."/>
            <person name="Cheuk R.F."/>
            <person name="Karlin-Newmann G."/>
            <person name="Liu S.X."/>
            <person name="Lam B."/>
            <person name="Sakano H."/>
            <person name="Wu T."/>
            <person name="Yu G."/>
            <person name="Miranda M."/>
            <person name="Quach H.L."/>
            <person name="Tripp M."/>
            <person name="Chang C.H."/>
            <person name="Lee J.M."/>
            <person name="Toriumi M.J."/>
            <person name="Chan M.M."/>
            <person name="Tang C.C."/>
            <person name="Onodera C.S."/>
            <person name="Deng J.M."/>
            <person name="Akiyama K."/>
            <person name="Ansari Y."/>
            <person name="Arakawa T."/>
            <person name="Banh J."/>
            <person name="Banno F."/>
            <person name="Bowser L."/>
            <person name="Brooks S.Y."/>
            <person name="Carninci P."/>
            <person name="Chao Q."/>
            <person name="Choy N."/>
            <person name="Enju A."/>
            <person name="Goldsmith A.D."/>
            <person name="Gurjal M."/>
            <person name="Hansen N.F."/>
            <person name="Hayashizaki Y."/>
            <person name="Johnson-Hopson C."/>
            <person name="Hsuan V.W."/>
            <person name="Iida K."/>
            <person name="Karnes M."/>
            <person name="Khan S."/>
            <person name="Koesema E."/>
            <person name="Ishida J."/>
            <person name="Jiang P.X."/>
            <person name="Jones T."/>
            <person name="Kawai J."/>
            <person name="Kamiya A."/>
            <person name="Meyers C."/>
            <person name="Nakajima M."/>
            <person name="Narusaka M."/>
            <person name="Seki M."/>
            <person name="Sakurai T."/>
            <person name="Satou M."/>
            <person name="Tamse R."/>
            <person name="Vaysberg M."/>
            <person name="Wallender E.K."/>
            <person name="Wong C."/>
            <person name="Yamamura Y."/>
            <person name="Yuan S."/>
            <person name="Shinozaki K."/>
            <person name="Davis R.W."/>
            <person name="Theologis A."/>
            <person name="Ecker J.R."/>
        </authorList>
    </citation>
    <scope>NUCLEOTIDE SEQUENCE [LARGE SCALE MRNA]</scope>
    <source>
        <strain>cv. Columbia</strain>
    </source>
</reference>
<reference key="5">
    <citation type="submission" date="2002-03" db="EMBL/GenBank/DDBJ databases">
        <title>Full-length cDNA from Arabidopsis thaliana.</title>
        <authorList>
            <person name="Brover V.V."/>
            <person name="Troukhan M.E."/>
            <person name="Alexandrov N.A."/>
            <person name="Lu Y.-P."/>
            <person name="Flavell R.B."/>
            <person name="Feldmann K.A."/>
        </authorList>
    </citation>
    <scope>NUCLEOTIDE SEQUENCE [LARGE SCALE MRNA]</scope>
</reference>
<reference key="6">
    <citation type="submission" date="2006-07" db="EMBL/GenBank/DDBJ databases">
        <title>Large-scale analysis of RIKEN Arabidopsis full-length (RAFL) cDNAs.</title>
        <authorList>
            <person name="Totoki Y."/>
            <person name="Seki M."/>
            <person name="Ishida J."/>
            <person name="Nakajima M."/>
            <person name="Enju A."/>
            <person name="Kamiya A."/>
            <person name="Narusaka M."/>
            <person name="Shin-i T."/>
            <person name="Nakagawa M."/>
            <person name="Sakamoto N."/>
            <person name="Oishi K."/>
            <person name="Kohara Y."/>
            <person name="Kobayashi M."/>
            <person name="Toyoda A."/>
            <person name="Sakaki Y."/>
            <person name="Sakurai T."/>
            <person name="Iida K."/>
            <person name="Akiyama K."/>
            <person name="Satou M."/>
            <person name="Toyoda T."/>
            <person name="Konagaya A."/>
            <person name="Carninci P."/>
            <person name="Kawai J."/>
            <person name="Hayashizaki Y."/>
            <person name="Shinozaki K."/>
        </authorList>
    </citation>
    <scope>NUCLEOTIDE SEQUENCE [LARGE SCALE MRNA]</scope>
    <source>
        <strain>cv. Columbia</strain>
    </source>
</reference>
<reference key="7">
    <citation type="journal article" date="2000" name="Plant Mol. Biol.">
        <title>Promiscuous and specific phospholipid binding by domains in ZAC, a membrane-associated Arabidopsis protein with an ARF GAP zinc finger and a C2 domain.</title>
        <authorList>
            <person name="Jensen R.B."/>
            <person name="Lykke-Andersen K."/>
            <person name="Frandsen G.I."/>
            <person name="Nielsen H.B."/>
            <person name="Haseloff J."/>
            <person name="Jespersen H.M."/>
            <person name="Mundy J."/>
            <person name="Skriver K."/>
        </authorList>
    </citation>
    <scope>NUCLEOTIDE SEQUENCE [MRNA] OF 7-483</scope>
    <source>
        <strain>cv. Columbia</strain>
    </source>
</reference>
<reference key="8">
    <citation type="journal article" date="2003" name="Plant Physiol.">
        <title>Analysis of the small GTPase gene superfamily of Arabidopsis.</title>
        <authorList>
            <person name="Vernoud V."/>
            <person name="Horton A.C."/>
            <person name="Yang Z."/>
            <person name="Nielsen E."/>
        </authorList>
    </citation>
    <scope>GENE FAMILY</scope>
    <scope>NOMENCLATURE</scope>
</reference>
<reference key="9">
    <citation type="journal article" date="2006" name="Plant Physiol.">
        <title>RPA, a class II ARFGAP protein, activates ARF1 and U5 and plays a role in root hair development in Arabidopsis.</title>
        <authorList>
            <person name="Song X.-F."/>
            <person name="Yang C.-Y."/>
            <person name="Liu J."/>
            <person name="Yang W.-C."/>
        </authorList>
    </citation>
    <scope>NOT SURE</scope>
</reference>
<reference key="10">
    <citation type="journal article" date="2009" name="Plant Physiol.">
        <title>Large-scale Arabidopsis phosphoproteome profiling reveals novel chloroplast kinase substrates and phosphorylation networks.</title>
        <authorList>
            <person name="Reiland S."/>
            <person name="Messerli G."/>
            <person name="Baerenfaller K."/>
            <person name="Gerrits B."/>
            <person name="Endler A."/>
            <person name="Grossmann J."/>
            <person name="Gruissem W."/>
            <person name="Baginsky S."/>
        </authorList>
    </citation>
    <scope>IDENTIFICATION BY MASS SPECTROMETRY [LARGE SCALE ANALYSIS]</scope>
</reference>
<reference key="11">
    <citation type="journal article" date="2010" name="Development">
        <title>The EVERSHED receptor-like kinase modulates floral organ shedding in Arabidopsis.</title>
        <authorList>
            <person name="Leslie M.E."/>
            <person name="Lewis M.W."/>
            <person name="Youn J.-Y."/>
            <person name="Daniels M.J."/>
            <person name="Liljegren S.J."/>
        </authorList>
    </citation>
    <scope>FUNCTION</scope>
    <scope>DISRUPTION PHENOTYPE</scope>
    <source>
        <strain>cv. Columbia</strain>
        <strain>cv. Landsberg erecta</strain>
    </source>
</reference>
<reference key="12">
    <citation type="journal article" date="2010" name="Plant J.">
        <title>The SERK1 receptor-like kinase regulates organ separation in Arabidopsis flowers.</title>
        <authorList>
            <person name="Lewis M.W."/>
            <person name="Leslie M.E."/>
            <person name="Fulcher E.H."/>
            <person name="Darnielle L."/>
            <person name="Healy P.N."/>
            <person name="Youn J.-Y."/>
            <person name="Liljegren S.J."/>
        </authorList>
    </citation>
    <scope>FUNCTION</scope>
    <scope>DISRUPTION PHENOTYPE</scope>
</reference>
<reference key="13">
    <citation type="journal article" date="2010" name="Plant J.">
        <title>AGD5 is a GTPase-activating protein at the trans-Golgi network.</title>
        <authorList>
            <person name="Stefano G."/>
            <person name="Renna L."/>
            <person name="Rossi M."/>
            <person name="Azzarello E."/>
            <person name="Pollastri S."/>
            <person name="Brandizzi F."/>
            <person name="Baluska F."/>
            <person name="Mancuso S."/>
        </authorList>
    </citation>
    <scope>FUNCTION</scope>
    <scope>MUTAGENESIS OF ARG-59</scope>
    <scope>SUBCELLULAR LOCATION</scope>
    <scope>INTERACTION WITH ARF1</scope>
    <source>
        <strain>cv. Columbia</strain>
    </source>
</reference>
<reference key="14">
    <citation type="journal article" date="2013" name="J. Exp. Bot.">
        <title>NEVERSHED and INFLORESCENCE DEFICIENT IN ABSCISSION are differentially required for cell expansion and cell separation during floral organ abscission in Arabidopsis thaliana.</title>
        <authorList>
            <person name="Liu B."/>
            <person name="Butenko M.A."/>
            <person name="Shi C.-L."/>
            <person name="Bolivar J.L."/>
            <person name="Winge P."/>
            <person name="Stenvik G.-E."/>
            <person name="Vie A.K."/>
            <person name="Leslie M.E."/>
            <person name="Brembu T."/>
            <person name="Kristiansen W."/>
            <person name="Bones A.M."/>
            <person name="Patterson S.E."/>
            <person name="Liljegren S.J."/>
            <person name="Aalen R.B."/>
        </authorList>
    </citation>
    <scope>FUNCTION</scope>
    <scope>DISRUPTION PHENOTYPE</scope>
    <source>
        <strain>cv. C24</strain>
        <strain>cv. Columbia</strain>
        <strain>cv. Landsberg erecta</strain>
    </source>
</reference>
<reference key="15">
    <citation type="journal article" date="2013" name="Plant Cell">
        <title>MTV1 and MTV4 encode plant-specific ENTH and ARF GAP proteins that mediate clathrin-dependent trafficking of vacuolar cargo from the trans-Golgi network.</title>
        <authorList>
            <person name="Sauer M."/>
            <person name="Delgadillo M.O."/>
            <person name="Zouhar J."/>
            <person name="Reynolds G.D."/>
            <person name="Pennington J.G."/>
            <person name="Jiang L."/>
            <person name="Liljegren S.J."/>
            <person name="Stierhof Y.-D."/>
            <person name="De Jaeger G."/>
            <person name="Otegui M.S."/>
            <person name="Bednarek S.Y."/>
            <person name="Rojo E."/>
        </authorList>
    </citation>
    <scope>FUNCTION</scope>
    <scope>DISRUPTION PHENOTYPE</scope>
    <scope>SUBCELLULAR LOCATION</scope>
    <scope>INTERACTION WITH CLATHRIN</scope>
    <scope>TISSUE SPECIFICITY</scope>
    <scope>DEVELOPMENTAL STAGE</scope>
    <source>
        <strain>cv. Columbia</strain>
    </source>
</reference>
<reference key="16">
    <citation type="journal article" date="2014" name="Plant Signal. Behav.">
        <title>HAESA and HAESA-LIKE2 activate organ abscission downstream of NEVERSHED and EVERSHED in Arabidopsis flowers.</title>
        <authorList>
            <person name="Gubert C.M."/>
            <person name="Liljegren S.J."/>
        </authorList>
    </citation>
    <scope>FUNCTION</scope>
    <scope>DISRUPTION PHENOTYPE</scope>
    <scope>REVIEW</scope>
</reference>
<accession>Q9FL69</accession>
<accession>C4NZX2</accession>
<accession>Q8L8M0</accession>
<accession>Q9FVH4</accession>
<dbReference type="EMBL" id="FJ794601">
    <property type="protein sequence ID" value="ACQ91177.1"/>
    <property type="molecule type" value="mRNA"/>
</dbReference>
<dbReference type="EMBL" id="AB010695">
    <property type="protein sequence ID" value="BAB10754.1"/>
    <property type="molecule type" value="Genomic_DNA"/>
</dbReference>
<dbReference type="EMBL" id="CP002688">
    <property type="protein sequence ID" value="AED96483.1"/>
    <property type="molecule type" value="Genomic_DNA"/>
</dbReference>
<dbReference type="EMBL" id="AY099716">
    <property type="protein sequence ID" value="AAM20567.1"/>
    <property type="molecule type" value="mRNA"/>
</dbReference>
<dbReference type="EMBL" id="BT000287">
    <property type="protein sequence ID" value="AAN15606.1"/>
    <property type="molecule type" value="mRNA"/>
</dbReference>
<dbReference type="EMBL" id="AY088913">
    <property type="protein sequence ID" value="AAM67219.1"/>
    <property type="molecule type" value="mRNA"/>
</dbReference>
<dbReference type="EMBL" id="AK226402">
    <property type="protein sequence ID" value="BAE98548.1"/>
    <property type="molecule type" value="mRNA"/>
</dbReference>
<dbReference type="EMBL" id="AF184144">
    <property type="protein sequence ID" value="AAG17004.1"/>
    <property type="molecule type" value="mRNA"/>
</dbReference>
<dbReference type="RefSeq" id="NP_568807.1">
    <property type="nucleotide sequence ID" value="NM_124811.5"/>
</dbReference>
<dbReference type="SMR" id="Q9FL69"/>
<dbReference type="BioGRID" id="20763">
    <property type="interactions" value="4"/>
</dbReference>
<dbReference type="FunCoup" id="Q9FL69">
    <property type="interactions" value="2870"/>
</dbReference>
<dbReference type="STRING" id="3702.Q9FL69"/>
<dbReference type="GlyGen" id="Q9FL69">
    <property type="glycosylation" value="2 sites"/>
</dbReference>
<dbReference type="iPTMnet" id="Q9FL69"/>
<dbReference type="MetOSite" id="Q9FL69"/>
<dbReference type="PaxDb" id="3702-AT5G54310.1"/>
<dbReference type="ProteomicsDB" id="244742"/>
<dbReference type="EnsemblPlants" id="AT5G54310.1">
    <property type="protein sequence ID" value="AT5G54310.1"/>
    <property type="gene ID" value="AT5G54310"/>
</dbReference>
<dbReference type="GeneID" id="835519"/>
<dbReference type="Gramene" id="AT5G54310.1">
    <property type="protein sequence ID" value="AT5G54310.1"/>
    <property type="gene ID" value="AT5G54310"/>
</dbReference>
<dbReference type="KEGG" id="ath:AT5G54310"/>
<dbReference type="Araport" id="AT5G54310"/>
<dbReference type="TAIR" id="AT5G54310">
    <property type="gene designation" value="AGD5"/>
</dbReference>
<dbReference type="eggNOG" id="KOG0703">
    <property type="taxonomic scope" value="Eukaryota"/>
</dbReference>
<dbReference type="HOGENOM" id="CLU_030143_0_0_1"/>
<dbReference type="InParanoid" id="Q9FL69"/>
<dbReference type="OMA" id="RSSFEQH"/>
<dbReference type="PhylomeDB" id="Q9FL69"/>
<dbReference type="PRO" id="PR:Q9FL69"/>
<dbReference type="Proteomes" id="UP000006548">
    <property type="component" value="Chromosome 5"/>
</dbReference>
<dbReference type="ExpressionAtlas" id="Q9FL69">
    <property type="expression patterns" value="baseline and differential"/>
</dbReference>
<dbReference type="GO" id="GO:0030136">
    <property type="term" value="C:clathrin-coated vesicle"/>
    <property type="evidence" value="ECO:0000314"/>
    <property type="project" value="UniProtKB"/>
</dbReference>
<dbReference type="GO" id="GO:0005768">
    <property type="term" value="C:endosome"/>
    <property type="evidence" value="ECO:0000314"/>
    <property type="project" value="TAIR"/>
</dbReference>
<dbReference type="GO" id="GO:0005802">
    <property type="term" value="C:trans-Golgi network"/>
    <property type="evidence" value="ECO:0000314"/>
    <property type="project" value="UniProtKB"/>
</dbReference>
<dbReference type="GO" id="GO:0030276">
    <property type="term" value="F:clathrin binding"/>
    <property type="evidence" value="ECO:0000314"/>
    <property type="project" value="UniProtKB"/>
</dbReference>
<dbReference type="GO" id="GO:0005096">
    <property type="term" value="F:GTPase activator activity"/>
    <property type="evidence" value="ECO:0007669"/>
    <property type="project" value="UniProtKB-KW"/>
</dbReference>
<dbReference type="GO" id="GO:0008270">
    <property type="term" value="F:zinc ion binding"/>
    <property type="evidence" value="ECO:0007669"/>
    <property type="project" value="UniProtKB-KW"/>
</dbReference>
<dbReference type="GO" id="GO:0090630">
    <property type="term" value="P:activation of GTPase activity"/>
    <property type="evidence" value="ECO:0000314"/>
    <property type="project" value="TAIR"/>
</dbReference>
<dbReference type="GO" id="GO:0035652">
    <property type="term" value="P:clathrin-coated vesicle cargo loading"/>
    <property type="evidence" value="ECO:0000315"/>
    <property type="project" value="UniProtKB"/>
</dbReference>
<dbReference type="GO" id="GO:0050829">
    <property type="term" value="P:defense response to Gram-negative bacterium"/>
    <property type="evidence" value="ECO:0000315"/>
    <property type="project" value="TAIR"/>
</dbReference>
<dbReference type="GO" id="GO:0010227">
    <property type="term" value="P:floral organ abscission"/>
    <property type="evidence" value="ECO:0000315"/>
    <property type="project" value="UniProtKB"/>
</dbReference>
<dbReference type="GO" id="GO:0060866">
    <property type="term" value="P:leaf abscission"/>
    <property type="evidence" value="ECO:0000315"/>
    <property type="project" value="TAIR"/>
</dbReference>
<dbReference type="GO" id="GO:0030308">
    <property type="term" value="P:negative regulation of cell growth"/>
    <property type="evidence" value="ECO:0000315"/>
    <property type="project" value="UniProtKB"/>
</dbReference>
<dbReference type="GO" id="GO:0016192">
    <property type="term" value="P:vesicle-mediated transport"/>
    <property type="evidence" value="ECO:0000270"/>
    <property type="project" value="UniProtKB"/>
</dbReference>
<dbReference type="CDD" id="cd08204">
    <property type="entry name" value="ArfGap"/>
    <property type="match status" value="1"/>
</dbReference>
<dbReference type="FunFam" id="1.10.220.150:FF:000009">
    <property type="entry name" value="stromal membrane-associated protein 1 isoform X1"/>
    <property type="match status" value="1"/>
</dbReference>
<dbReference type="Gene3D" id="1.10.220.150">
    <property type="entry name" value="Arf GTPase activating protein"/>
    <property type="match status" value="1"/>
</dbReference>
<dbReference type="InterPro" id="IPR044520">
    <property type="entry name" value="ARF_GAP_AGD5/15"/>
</dbReference>
<dbReference type="InterPro" id="IPR037278">
    <property type="entry name" value="ARFGAP/RecO"/>
</dbReference>
<dbReference type="InterPro" id="IPR001164">
    <property type="entry name" value="ArfGAP_dom"/>
</dbReference>
<dbReference type="InterPro" id="IPR038508">
    <property type="entry name" value="ArfGAP_dom_sf"/>
</dbReference>
<dbReference type="PANTHER" id="PTHR46419">
    <property type="entry name" value="ADP-RIBOSYLATION FACTOR GTPASE-ACTIVATING PROTEIN AGD5"/>
    <property type="match status" value="1"/>
</dbReference>
<dbReference type="PANTHER" id="PTHR46419:SF2">
    <property type="entry name" value="ADP-RIBOSYLATION FACTOR GTPASE-ACTIVATING PROTEIN AGD5"/>
    <property type="match status" value="1"/>
</dbReference>
<dbReference type="Pfam" id="PF01412">
    <property type="entry name" value="ArfGap"/>
    <property type="match status" value="1"/>
</dbReference>
<dbReference type="PRINTS" id="PR00405">
    <property type="entry name" value="REVINTRACTNG"/>
</dbReference>
<dbReference type="SMART" id="SM00105">
    <property type="entry name" value="ArfGap"/>
    <property type="match status" value="1"/>
</dbReference>
<dbReference type="SUPFAM" id="SSF57863">
    <property type="entry name" value="ArfGap/RecO-like zinc finger"/>
    <property type="match status" value="1"/>
</dbReference>
<dbReference type="PROSITE" id="PS50115">
    <property type="entry name" value="ARFGAP"/>
    <property type="match status" value="1"/>
</dbReference>
<protein>
    <recommendedName>
        <fullName evidence="11">ADP-ribosylation factor GTPase-activating protein AGD5</fullName>
        <shortName evidence="11">ARF GAP AGD5</shortName>
    </recommendedName>
    <alternativeName>
        <fullName evidence="11">Protein ARF-GAP DOMAIN 5</fullName>
        <shortName evidence="11">AtAGD5</shortName>
    </alternativeName>
    <alternativeName>
        <fullName evidence="13">Protein MODIFIED TRANSPORT TO THE VACUOLE 4</fullName>
    </alternativeName>
    <alternativeName>
        <fullName evidence="12">Protein NEVERSHED</fullName>
    </alternativeName>
    <alternativeName>
        <fullName evidence="10">Protein ZIGA3</fullName>
    </alternativeName>
</protein>
<sequence>MNEKANVSKELNARHRKILEGLLKHPENRECADCKTKGPRWASVNLGIFICMQCSGIHRSLGVHISKVRSATLDTWLPEQVAFIQSMGNDKANSYWEAELPPNYDRVGIENFIRAKYEEKRWVSRGEKARSPPRVEQERRKSVERSGPGYEHGHSSSPVNLFEERKTIPASRTRNNVAATRINLPVPPQGPSQVIKPQQKMESAATPVEREKQAVNVAPASDPPKVDFATDLFNMLSMDDSTTNTSEATPGDTPADDNSWAGFQSAGSGQTAEKIVTAKPAESSSPPASSSDFEDLFKDTPNLTTQQAPKDVKGDIMSLFEKTNIVSPFAMHQQQVAMLAQQQALYMAAAKAAGGTPNGVNQQAIANALNVASANWSNPGGYQIPGMTNPVGGQADLQKLMQNMNMNANMNTRPAQPQENTLQYPSSSFYTMGQANQVNGMTPNSTGKPQSSSATQPTSTTPSSQSGKDFDFSSLMDGMFTKH</sequence>
<proteinExistence type="evidence at protein level"/>
<name>AGD5_ARATH</name>
<keyword id="KW-0968">Cytoplasmic vesicle</keyword>
<keyword id="KW-0967">Endosome</keyword>
<keyword id="KW-0333">Golgi apparatus</keyword>
<keyword id="KW-0343">GTPase activation</keyword>
<keyword id="KW-0479">Metal-binding</keyword>
<keyword id="KW-1185">Reference proteome</keyword>
<keyword id="KW-0862">Zinc</keyword>
<keyword id="KW-0863">Zinc-finger</keyword>
<organism>
    <name type="scientific">Arabidopsis thaliana</name>
    <name type="common">Mouse-ear cress</name>
    <dbReference type="NCBI Taxonomy" id="3702"/>
    <lineage>
        <taxon>Eukaryota</taxon>
        <taxon>Viridiplantae</taxon>
        <taxon>Streptophyta</taxon>
        <taxon>Embryophyta</taxon>
        <taxon>Tracheophyta</taxon>
        <taxon>Spermatophyta</taxon>
        <taxon>Magnoliopsida</taxon>
        <taxon>eudicotyledons</taxon>
        <taxon>Gunneridae</taxon>
        <taxon>Pentapetalae</taxon>
        <taxon>rosids</taxon>
        <taxon>malvids</taxon>
        <taxon>Brassicales</taxon>
        <taxon>Brassicaceae</taxon>
        <taxon>Camelineae</taxon>
        <taxon>Arabidopsis</taxon>
    </lineage>
</organism>